<reference key="1">
    <citation type="journal article" date="2002" name="Mol. Microbiol.">
        <title>Genome sequence of Streptococcus agalactiae, a pathogen causing invasive neonatal disease.</title>
        <authorList>
            <person name="Glaser P."/>
            <person name="Rusniok C."/>
            <person name="Buchrieser C."/>
            <person name="Chevalier F."/>
            <person name="Frangeul L."/>
            <person name="Msadek T."/>
            <person name="Zouine M."/>
            <person name="Couve E."/>
            <person name="Lalioui L."/>
            <person name="Poyart C."/>
            <person name="Trieu-Cuot P."/>
            <person name="Kunst F."/>
        </authorList>
    </citation>
    <scope>NUCLEOTIDE SEQUENCE [LARGE SCALE GENOMIC DNA]</scope>
    <source>
        <strain>NEM316</strain>
    </source>
</reference>
<comment type="catalytic activity">
    <reaction evidence="2">
        <text>tRNA(His) + L-histidine + ATP = L-histidyl-tRNA(His) + AMP + diphosphate + H(+)</text>
        <dbReference type="Rhea" id="RHEA:17313"/>
        <dbReference type="Rhea" id="RHEA-COMP:9665"/>
        <dbReference type="Rhea" id="RHEA-COMP:9689"/>
        <dbReference type="ChEBI" id="CHEBI:15378"/>
        <dbReference type="ChEBI" id="CHEBI:30616"/>
        <dbReference type="ChEBI" id="CHEBI:33019"/>
        <dbReference type="ChEBI" id="CHEBI:57595"/>
        <dbReference type="ChEBI" id="CHEBI:78442"/>
        <dbReference type="ChEBI" id="CHEBI:78527"/>
        <dbReference type="ChEBI" id="CHEBI:456215"/>
        <dbReference type="EC" id="6.1.1.21"/>
    </reaction>
</comment>
<comment type="subunit">
    <text evidence="2">Homodimer.</text>
</comment>
<comment type="subcellular location">
    <subcellularLocation>
        <location evidence="2">Cytoplasm</location>
    </subcellularLocation>
</comment>
<comment type="similarity">
    <text evidence="2">Belongs to the class-II aminoacyl-tRNA synthetase family.</text>
</comment>
<organism>
    <name type="scientific">Streptococcus agalactiae serotype III (strain NEM316)</name>
    <dbReference type="NCBI Taxonomy" id="211110"/>
    <lineage>
        <taxon>Bacteria</taxon>
        <taxon>Bacillati</taxon>
        <taxon>Bacillota</taxon>
        <taxon>Bacilli</taxon>
        <taxon>Lactobacillales</taxon>
        <taxon>Streptococcaceae</taxon>
        <taxon>Streptococcus</taxon>
    </lineage>
</organism>
<dbReference type="EC" id="6.1.1.21" evidence="2"/>
<dbReference type="EMBL" id="AL766856">
    <property type="protein sequence ID" value="CAD47720.1"/>
    <property type="molecule type" value="Genomic_DNA"/>
</dbReference>
<dbReference type="RefSeq" id="WP_000775901.1">
    <property type="nucleotide sequence ID" value="NC_004368.1"/>
</dbReference>
<dbReference type="SMR" id="P67485"/>
<dbReference type="KEGG" id="san:hisS"/>
<dbReference type="eggNOG" id="COG0124">
    <property type="taxonomic scope" value="Bacteria"/>
</dbReference>
<dbReference type="HOGENOM" id="CLU_025113_1_1_9"/>
<dbReference type="Proteomes" id="UP000000823">
    <property type="component" value="Chromosome"/>
</dbReference>
<dbReference type="GO" id="GO:0005737">
    <property type="term" value="C:cytoplasm"/>
    <property type="evidence" value="ECO:0007669"/>
    <property type="project" value="UniProtKB-SubCell"/>
</dbReference>
<dbReference type="GO" id="GO:0005524">
    <property type="term" value="F:ATP binding"/>
    <property type="evidence" value="ECO:0007669"/>
    <property type="project" value="UniProtKB-UniRule"/>
</dbReference>
<dbReference type="GO" id="GO:0140096">
    <property type="term" value="F:catalytic activity, acting on a protein"/>
    <property type="evidence" value="ECO:0007669"/>
    <property type="project" value="UniProtKB-ARBA"/>
</dbReference>
<dbReference type="GO" id="GO:0004821">
    <property type="term" value="F:histidine-tRNA ligase activity"/>
    <property type="evidence" value="ECO:0007669"/>
    <property type="project" value="UniProtKB-UniRule"/>
</dbReference>
<dbReference type="GO" id="GO:0016740">
    <property type="term" value="F:transferase activity"/>
    <property type="evidence" value="ECO:0007669"/>
    <property type="project" value="UniProtKB-ARBA"/>
</dbReference>
<dbReference type="GO" id="GO:0006427">
    <property type="term" value="P:histidyl-tRNA aminoacylation"/>
    <property type="evidence" value="ECO:0007669"/>
    <property type="project" value="UniProtKB-UniRule"/>
</dbReference>
<dbReference type="CDD" id="cd00773">
    <property type="entry name" value="HisRS-like_core"/>
    <property type="match status" value="1"/>
</dbReference>
<dbReference type="CDD" id="cd00859">
    <property type="entry name" value="HisRS_anticodon"/>
    <property type="match status" value="1"/>
</dbReference>
<dbReference type="FunFam" id="3.30.930.10:FF:000005">
    <property type="entry name" value="Histidine--tRNA ligase"/>
    <property type="match status" value="1"/>
</dbReference>
<dbReference type="Gene3D" id="3.40.50.800">
    <property type="entry name" value="Anticodon-binding domain"/>
    <property type="match status" value="1"/>
</dbReference>
<dbReference type="Gene3D" id="3.30.930.10">
    <property type="entry name" value="Bira Bifunctional Protein, Domain 2"/>
    <property type="match status" value="1"/>
</dbReference>
<dbReference type="HAMAP" id="MF_00127">
    <property type="entry name" value="His_tRNA_synth"/>
    <property type="match status" value="1"/>
</dbReference>
<dbReference type="InterPro" id="IPR006195">
    <property type="entry name" value="aa-tRNA-synth_II"/>
</dbReference>
<dbReference type="InterPro" id="IPR045864">
    <property type="entry name" value="aa-tRNA-synth_II/BPL/LPL"/>
</dbReference>
<dbReference type="InterPro" id="IPR004154">
    <property type="entry name" value="Anticodon-bd"/>
</dbReference>
<dbReference type="InterPro" id="IPR036621">
    <property type="entry name" value="Anticodon-bd_dom_sf"/>
</dbReference>
<dbReference type="InterPro" id="IPR015807">
    <property type="entry name" value="His-tRNA-ligase"/>
</dbReference>
<dbReference type="InterPro" id="IPR041715">
    <property type="entry name" value="HisRS-like_core"/>
</dbReference>
<dbReference type="InterPro" id="IPR004516">
    <property type="entry name" value="HisRS/HisZ"/>
</dbReference>
<dbReference type="InterPro" id="IPR033656">
    <property type="entry name" value="HisRS_anticodon"/>
</dbReference>
<dbReference type="NCBIfam" id="TIGR00442">
    <property type="entry name" value="hisS"/>
    <property type="match status" value="1"/>
</dbReference>
<dbReference type="PANTHER" id="PTHR43707:SF1">
    <property type="entry name" value="HISTIDINE--TRNA LIGASE, MITOCHONDRIAL-RELATED"/>
    <property type="match status" value="1"/>
</dbReference>
<dbReference type="PANTHER" id="PTHR43707">
    <property type="entry name" value="HISTIDYL-TRNA SYNTHETASE"/>
    <property type="match status" value="1"/>
</dbReference>
<dbReference type="Pfam" id="PF03129">
    <property type="entry name" value="HGTP_anticodon"/>
    <property type="match status" value="1"/>
</dbReference>
<dbReference type="Pfam" id="PF13393">
    <property type="entry name" value="tRNA-synt_His"/>
    <property type="match status" value="1"/>
</dbReference>
<dbReference type="PIRSF" id="PIRSF001549">
    <property type="entry name" value="His-tRNA_synth"/>
    <property type="match status" value="1"/>
</dbReference>
<dbReference type="SUPFAM" id="SSF52954">
    <property type="entry name" value="Class II aaRS ABD-related"/>
    <property type="match status" value="1"/>
</dbReference>
<dbReference type="SUPFAM" id="SSF55681">
    <property type="entry name" value="Class II aaRS and biotin synthetases"/>
    <property type="match status" value="1"/>
</dbReference>
<dbReference type="PROSITE" id="PS50862">
    <property type="entry name" value="AA_TRNA_LIGASE_II"/>
    <property type="match status" value="1"/>
</dbReference>
<proteinExistence type="inferred from homology"/>
<keyword id="KW-0030">Aminoacyl-tRNA synthetase</keyword>
<keyword id="KW-0067">ATP-binding</keyword>
<keyword id="KW-0963">Cytoplasm</keyword>
<keyword id="KW-0436">Ligase</keyword>
<keyword id="KW-0547">Nucleotide-binding</keyword>
<keyword id="KW-0648">Protein biosynthesis</keyword>
<sequence length="426" mass="48497">MKLQKPKGTQDILPGESAKWQYVENVIRNLFKQYHYDEIRTPMFEHYEVISRSVGDTTDIVTKEMYDFHDKGDRHITLRPEGTAPVVRSYVENKLFAPEVQKPTKMYYIGSMFRYERPQAGRLREFHQVGVECFGSNNPATDVETIAMGHHLFEDLGIKNVKLHLNSLGNPESRQAYRQALIDYLTPIREQLSKDSQRRLNENPLRVLDSKEPEDKLAVENAPSILDYLDESSQAHFDAVCHMLDALNIPYIIDTNMVRGLDYYNHTIFEFITEIEDNELTICAGGRYDGLVSYFGGPETPAFGFGLGLERLLLILDKQGISLPIENTIDLYIAVLGSEANLAALDLAQSIRHQGFKVERDYLGRKIKAQFKSADTFNAKVIMTLGSSEVDSKEVGLKNNQTRQEVKVSFENIKTDFSSVLKQLGL</sequence>
<name>SYH_STRA3</name>
<accession>P67485</accession>
<accession>Q8DWV4</accession>
<accession>Q8E2Q6</accession>
<gene>
    <name evidence="2" type="primary">hisS</name>
    <name type="ordered locus">gbs2061</name>
</gene>
<feature type="initiator methionine" description="Removed" evidence="1">
    <location>
        <position position="1"/>
    </location>
</feature>
<feature type="chain" id="PRO_0000136260" description="Histidine--tRNA ligase">
    <location>
        <begin position="2"/>
        <end position="426"/>
    </location>
</feature>
<evidence type="ECO:0000250" key="1"/>
<evidence type="ECO:0000255" key="2">
    <source>
        <dbReference type="HAMAP-Rule" id="MF_00127"/>
    </source>
</evidence>
<protein>
    <recommendedName>
        <fullName evidence="2">Histidine--tRNA ligase</fullName>
        <ecNumber evidence="2">6.1.1.21</ecNumber>
    </recommendedName>
    <alternativeName>
        <fullName evidence="2">Histidyl-tRNA synthetase</fullName>
        <shortName evidence="2">HisRS</shortName>
    </alternativeName>
</protein>